<protein>
    <recommendedName>
        <fullName evidence="1">Phosphoglycerate kinase</fullName>
        <ecNumber evidence="1">2.7.2.3</ecNumber>
    </recommendedName>
</protein>
<gene>
    <name evidence="1" type="primary">pgk</name>
    <name type="ordered locus">CTA_0754</name>
</gene>
<dbReference type="EC" id="2.7.2.3" evidence="1"/>
<dbReference type="EMBL" id="CP000051">
    <property type="protein sequence ID" value="AAX50971.1"/>
    <property type="molecule type" value="Genomic_DNA"/>
</dbReference>
<dbReference type="RefSeq" id="WP_011324833.1">
    <property type="nucleotide sequence ID" value="NC_007429.1"/>
</dbReference>
<dbReference type="SMR" id="Q3KL01"/>
<dbReference type="KEGG" id="cta:CTA_0754"/>
<dbReference type="HOGENOM" id="CLU_025427_0_2_0"/>
<dbReference type="UniPathway" id="UPA00109">
    <property type="reaction ID" value="UER00185"/>
</dbReference>
<dbReference type="Proteomes" id="UP000002532">
    <property type="component" value="Chromosome"/>
</dbReference>
<dbReference type="GO" id="GO:0005829">
    <property type="term" value="C:cytosol"/>
    <property type="evidence" value="ECO:0007669"/>
    <property type="project" value="TreeGrafter"/>
</dbReference>
<dbReference type="GO" id="GO:0043531">
    <property type="term" value="F:ADP binding"/>
    <property type="evidence" value="ECO:0007669"/>
    <property type="project" value="TreeGrafter"/>
</dbReference>
<dbReference type="GO" id="GO:0005524">
    <property type="term" value="F:ATP binding"/>
    <property type="evidence" value="ECO:0007669"/>
    <property type="project" value="UniProtKB-KW"/>
</dbReference>
<dbReference type="GO" id="GO:0004618">
    <property type="term" value="F:phosphoglycerate kinase activity"/>
    <property type="evidence" value="ECO:0007669"/>
    <property type="project" value="UniProtKB-UniRule"/>
</dbReference>
<dbReference type="GO" id="GO:0006094">
    <property type="term" value="P:gluconeogenesis"/>
    <property type="evidence" value="ECO:0007669"/>
    <property type="project" value="TreeGrafter"/>
</dbReference>
<dbReference type="GO" id="GO:0006096">
    <property type="term" value="P:glycolytic process"/>
    <property type="evidence" value="ECO:0007669"/>
    <property type="project" value="UniProtKB-UniRule"/>
</dbReference>
<dbReference type="CDD" id="cd00318">
    <property type="entry name" value="Phosphoglycerate_kinase"/>
    <property type="match status" value="1"/>
</dbReference>
<dbReference type="FunFam" id="3.40.50.1260:FF:000007">
    <property type="entry name" value="Phosphoglycerate kinase"/>
    <property type="match status" value="1"/>
</dbReference>
<dbReference type="FunFam" id="3.40.50.1260:FF:000011">
    <property type="entry name" value="Phosphoglycerate kinase"/>
    <property type="match status" value="1"/>
</dbReference>
<dbReference type="Gene3D" id="3.40.50.1260">
    <property type="entry name" value="Phosphoglycerate kinase, N-terminal domain"/>
    <property type="match status" value="2"/>
</dbReference>
<dbReference type="HAMAP" id="MF_00145">
    <property type="entry name" value="Phosphoglyc_kinase"/>
    <property type="match status" value="1"/>
</dbReference>
<dbReference type="InterPro" id="IPR001576">
    <property type="entry name" value="Phosphoglycerate_kinase"/>
</dbReference>
<dbReference type="InterPro" id="IPR015911">
    <property type="entry name" value="Phosphoglycerate_kinase_CS"/>
</dbReference>
<dbReference type="InterPro" id="IPR015824">
    <property type="entry name" value="Phosphoglycerate_kinase_N"/>
</dbReference>
<dbReference type="InterPro" id="IPR036043">
    <property type="entry name" value="Phosphoglycerate_kinase_sf"/>
</dbReference>
<dbReference type="PANTHER" id="PTHR11406">
    <property type="entry name" value="PHOSPHOGLYCERATE KINASE"/>
    <property type="match status" value="1"/>
</dbReference>
<dbReference type="PANTHER" id="PTHR11406:SF23">
    <property type="entry name" value="PHOSPHOGLYCERATE KINASE 1, CHLOROPLASTIC-RELATED"/>
    <property type="match status" value="1"/>
</dbReference>
<dbReference type="Pfam" id="PF00162">
    <property type="entry name" value="PGK"/>
    <property type="match status" value="1"/>
</dbReference>
<dbReference type="PIRSF" id="PIRSF000724">
    <property type="entry name" value="Pgk"/>
    <property type="match status" value="1"/>
</dbReference>
<dbReference type="PRINTS" id="PR00477">
    <property type="entry name" value="PHGLYCKINASE"/>
</dbReference>
<dbReference type="SUPFAM" id="SSF53748">
    <property type="entry name" value="Phosphoglycerate kinase"/>
    <property type="match status" value="1"/>
</dbReference>
<dbReference type="PROSITE" id="PS00111">
    <property type="entry name" value="PGLYCERATE_KINASE"/>
    <property type="match status" value="1"/>
</dbReference>
<name>PGK_CHLTA</name>
<sequence length="403" mass="43052">MDKLSIRDLSLEGKKVLVRVDFNVPIKDGKILDDVRIRSAMPTIHYLLKQDAAVILVSHLGRPKGGVFEEAYSLAPIVPVLEGYLGHHVPLSPDCIGEVARQAVAQLSPGRVLLLENVRFHKGEEHPDEDPSFAIELAAYADFYVNDAFGTSHRKHASVYRVPQLFPDRAAAGFLMEKELEFLGQHLLVEPKRPFTAILGGAKMSSKIGVIEALLSCVDHLVLAGGMGYTFLRAINRQVGNSLVEESGIPLAKKVLEKAQALGVKIHLPVDAKVAKQCDSGEDWRELSIQEGIPEGLAGFDIGAQTIELFSKVIQESATIFWNGPVGVYEVPPFDQGSKAIAQCLASHSSAVTVVGGGDAAAVVALAGCASQISHVSTGGGASLEFLEKSSLPGTEILSPAQS</sequence>
<proteinExistence type="inferred from homology"/>
<feature type="chain" id="PRO_1000057978" description="Phosphoglycerate kinase">
    <location>
        <begin position="1"/>
        <end position="403"/>
    </location>
</feature>
<feature type="binding site" evidence="1">
    <location>
        <begin position="21"/>
        <end position="23"/>
    </location>
    <ligand>
        <name>substrate</name>
    </ligand>
</feature>
<feature type="binding site" evidence="1">
    <location>
        <position position="36"/>
    </location>
    <ligand>
        <name>substrate</name>
    </ligand>
</feature>
<feature type="binding site" evidence="1">
    <location>
        <begin position="59"/>
        <end position="62"/>
    </location>
    <ligand>
        <name>substrate</name>
    </ligand>
</feature>
<feature type="binding site" evidence="1">
    <location>
        <position position="119"/>
    </location>
    <ligand>
        <name>substrate</name>
    </ligand>
</feature>
<feature type="binding site" evidence="1">
    <location>
        <position position="154"/>
    </location>
    <ligand>
        <name>substrate</name>
    </ligand>
</feature>
<feature type="binding site" evidence="1">
    <location>
        <position position="207"/>
    </location>
    <ligand>
        <name>ATP</name>
        <dbReference type="ChEBI" id="CHEBI:30616"/>
    </ligand>
</feature>
<feature type="binding site" evidence="1">
    <location>
        <position position="299"/>
    </location>
    <ligand>
        <name>ATP</name>
        <dbReference type="ChEBI" id="CHEBI:30616"/>
    </ligand>
</feature>
<feature type="binding site" evidence="1">
    <location>
        <position position="330"/>
    </location>
    <ligand>
        <name>ATP</name>
        <dbReference type="ChEBI" id="CHEBI:30616"/>
    </ligand>
</feature>
<feature type="binding site" evidence="1">
    <location>
        <begin position="357"/>
        <end position="360"/>
    </location>
    <ligand>
        <name>ATP</name>
        <dbReference type="ChEBI" id="CHEBI:30616"/>
    </ligand>
</feature>
<keyword id="KW-0067">ATP-binding</keyword>
<keyword id="KW-0963">Cytoplasm</keyword>
<keyword id="KW-0324">Glycolysis</keyword>
<keyword id="KW-0418">Kinase</keyword>
<keyword id="KW-0547">Nucleotide-binding</keyword>
<keyword id="KW-0808">Transferase</keyword>
<reference key="1">
    <citation type="journal article" date="2005" name="Infect. Immun.">
        <title>Comparative genomic analysis of Chlamydia trachomatis oculotropic and genitotropic strains.</title>
        <authorList>
            <person name="Carlson J.H."/>
            <person name="Porcella S.F."/>
            <person name="McClarty G."/>
            <person name="Caldwell H.D."/>
        </authorList>
    </citation>
    <scope>NUCLEOTIDE SEQUENCE [LARGE SCALE GENOMIC DNA]</scope>
    <source>
        <strain>ATCC VR-571B / DSM 19440 / HAR-13</strain>
    </source>
</reference>
<comment type="catalytic activity">
    <reaction evidence="1">
        <text>(2R)-3-phosphoglycerate + ATP = (2R)-3-phospho-glyceroyl phosphate + ADP</text>
        <dbReference type="Rhea" id="RHEA:14801"/>
        <dbReference type="ChEBI" id="CHEBI:30616"/>
        <dbReference type="ChEBI" id="CHEBI:57604"/>
        <dbReference type="ChEBI" id="CHEBI:58272"/>
        <dbReference type="ChEBI" id="CHEBI:456216"/>
        <dbReference type="EC" id="2.7.2.3"/>
    </reaction>
</comment>
<comment type="pathway">
    <text evidence="1">Carbohydrate degradation; glycolysis; pyruvate from D-glyceraldehyde 3-phosphate: step 2/5.</text>
</comment>
<comment type="subunit">
    <text evidence="1">Monomer.</text>
</comment>
<comment type="subcellular location">
    <subcellularLocation>
        <location evidence="1">Cytoplasm</location>
    </subcellularLocation>
</comment>
<comment type="similarity">
    <text evidence="1">Belongs to the phosphoglycerate kinase family.</text>
</comment>
<organism>
    <name type="scientific">Chlamydia trachomatis serovar A (strain ATCC VR-571B / DSM 19440 / HAR-13)</name>
    <dbReference type="NCBI Taxonomy" id="315277"/>
    <lineage>
        <taxon>Bacteria</taxon>
        <taxon>Pseudomonadati</taxon>
        <taxon>Chlamydiota</taxon>
        <taxon>Chlamydiia</taxon>
        <taxon>Chlamydiales</taxon>
        <taxon>Chlamydiaceae</taxon>
        <taxon>Chlamydia/Chlamydophila group</taxon>
        <taxon>Chlamydia</taxon>
    </lineage>
</organism>
<accession>Q3KL01</accession>
<evidence type="ECO:0000255" key="1">
    <source>
        <dbReference type="HAMAP-Rule" id="MF_00145"/>
    </source>
</evidence>